<organism>
    <name type="scientific">Solanum lycopersicum</name>
    <name type="common">Tomato</name>
    <name type="synonym">Lycopersicon esculentum</name>
    <dbReference type="NCBI Taxonomy" id="4081"/>
    <lineage>
        <taxon>Eukaryota</taxon>
        <taxon>Viridiplantae</taxon>
        <taxon>Streptophyta</taxon>
        <taxon>Embryophyta</taxon>
        <taxon>Tracheophyta</taxon>
        <taxon>Spermatophyta</taxon>
        <taxon>Magnoliopsida</taxon>
        <taxon>eudicotyledons</taxon>
        <taxon>Gunneridae</taxon>
        <taxon>Pentapetalae</taxon>
        <taxon>asterids</taxon>
        <taxon>lamiids</taxon>
        <taxon>Solanales</taxon>
        <taxon>Solanaceae</taxon>
        <taxon>Solanoideae</taxon>
        <taxon>Solaneae</taxon>
        <taxon>Solanum</taxon>
        <taxon>Solanum subgen. Lycopersicon</taxon>
    </lineage>
</organism>
<sequence>MAFFLIFLSSFFGLCIFCTALLRWNQVKYNQKNLPPGTMGWPLFGETTEFLKLGPSFMKNQRARYGSFFKSHILGCPTIVSMDSELNRYILVNEAKGLVPGYPQSMIDILGKCNIAAVNGSAHKYMRGALLSLISPTMIRDQLLPKIDEFMRSHLTNWDNKVIDIQEKTNKMAFLSSLKQIAGIESTSLAQEFMSEFFNLVLGTLSLPINLPNTNYHRGFQARKIIVNLLRTLIEERRASKEIQHDMLGYLMNEEATRFKLTDDEMIDLIITILYSGYETVSTTSMMAVKYLHDHPKVLEELRKEHMAIREKKKPEDPIDYNDYRSMRFTRAVILETSRLATIVNGVLRKTTQDMEINGYIIPKGWRIYVYTRELNYDPRLYPDPYSFNPWRWMDKSLEHQNSFLVFGGGTRQCPGKELGVAEISTFLHYFVTKYRWEEIGGDKLMKFPRVEAPNGLRIRVSAH</sequence>
<gene>
    <name evidence="8" type="primary">CYP85A1</name>
    <name evidence="9" type="synonym">CYP85</name>
    <name evidence="9 10" type="synonym">D</name>
</gene>
<name>C85A1_SOLLC</name>
<comment type="function">
    <text evidence="3 4 6">Catalyzes the C6-oxidation step in brassinosteroids biosynthesis (PubMed:15710611). Converts 6-deoxocastasterone (6-deoxoCS) to castasterone (CS) (PubMed:15710611, PubMed:9990098). May also convert 6-deoxoteasterone (6-deoxoTE) to teasterone (TE), 3-dehydro-6-deoxoteasterone (6-deoxo3DT, 6-deoxo3DHT) to 3-dehydroteasterone (3DT, 3-DHT), and 6-deoxotyphasterol (6-deoxoTY) to typhasterol (TY), but not castasterone (CS) to brassinolide (BL) (PubMed:15710611).</text>
</comment>
<comment type="catalytic activity">
    <reaction evidence="4">
        <text>6-deoxocastasterone + reduced [NADPH--hemoprotein reductase] + O2 = 6alpha-hydroxycastasterone + oxidized [NADPH--hemoprotein reductase] + H2O + H(+)</text>
        <dbReference type="Rhea" id="RHEA:69875"/>
        <dbReference type="Rhea" id="RHEA-COMP:11964"/>
        <dbReference type="Rhea" id="RHEA-COMP:11965"/>
        <dbReference type="ChEBI" id="CHEBI:15377"/>
        <dbReference type="ChEBI" id="CHEBI:15378"/>
        <dbReference type="ChEBI" id="CHEBI:15379"/>
        <dbReference type="ChEBI" id="CHEBI:20712"/>
        <dbReference type="ChEBI" id="CHEBI:20760"/>
        <dbReference type="ChEBI" id="CHEBI:57618"/>
        <dbReference type="ChEBI" id="CHEBI:58210"/>
    </reaction>
    <physiologicalReaction direction="left-to-right" evidence="4">
        <dbReference type="Rhea" id="RHEA:69876"/>
    </physiologicalReaction>
</comment>
<comment type="catalytic activity">
    <reaction evidence="4">
        <text>6alpha-hydroxycastasterone + reduced [NADPH--hemoprotein reductase] + O2 = castasterone + oxidized [NADPH--hemoprotein reductase] + 2 H2O + H(+)</text>
        <dbReference type="Rhea" id="RHEA:69879"/>
        <dbReference type="Rhea" id="RHEA-COMP:11964"/>
        <dbReference type="Rhea" id="RHEA-COMP:11965"/>
        <dbReference type="ChEBI" id="CHEBI:15377"/>
        <dbReference type="ChEBI" id="CHEBI:15378"/>
        <dbReference type="ChEBI" id="CHEBI:15379"/>
        <dbReference type="ChEBI" id="CHEBI:20760"/>
        <dbReference type="ChEBI" id="CHEBI:23051"/>
        <dbReference type="ChEBI" id="CHEBI:57618"/>
        <dbReference type="ChEBI" id="CHEBI:58210"/>
    </reaction>
    <physiologicalReaction direction="left-to-right" evidence="4">
        <dbReference type="Rhea" id="RHEA:69880"/>
    </physiologicalReaction>
</comment>
<comment type="catalytic activity">
    <reaction evidence="4">
        <text>6-deoxocastasterone + 2 reduced [NADPH--hemoprotein reductase] + 2 O2 = castasterone + 2 oxidized [NADPH--hemoprotein reductase] + 3 H2O + 2 H(+)</text>
        <dbReference type="Rhea" id="RHEA:70031"/>
        <dbReference type="Rhea" id="RHEA-COMP:11964"/>
        <dbReference type="Rhea" id="RHEA-COMP:11965"/>
        <dbReference type="ChEBI" id="CHEBI:15377"/>
        <dbReference type="ChEBI" id="CHEBI:15378"/>
        <dbReference type="ChEBI" id="CHEBI:15379"/>
        <dbReference type="ChEBI" id="CHEBI:20712"/>
        <dbReference type="ChEBI" id="CHEBI:23051"/>
        <dbReference type="ChEBI" id="CHEBI:57618"/>
        <dbReference type="ChEBI" id="CHEBI:58210"/>
    </reaction>
    <physiologicalReaction direction="left-to-right" evidence="4">
        <dbReference type="Rhea" id="RHEA:70032"/>
    </physiologicalReaction>
</comment>
<comment type="cofactor">
    <cofactor evidence="1">
        <name>heme</name>
        <dbReference type="ChEBI" id="CHEBI:30413"/>
    </cofactor>
</comment>
<comment type="pathway">
    <text evidence="4 6">Plant hormone biosynthesis; brassinosteroid biosynthesis.</text>
</comment>
<comment type="subcellular location">
    <subcellularLocation>
        <location evidence="2">Membrane</location>
        <topology evidence="2">Single-pass membrane protein</topology>
    </subcellularLocation>
</comment>
<comment type="tissue specificity">
    <text evidence="4 5">Expressed in sub-meristematic regions of shoot and root apexes, in zones undergoing lateral root formation, in fruits, and in all flower parts, with a high expression in young flower buds and at the joint in the pedicel.</text>
</comment>
<comment type="developmental stage">
    <text evidence="5">Strong expression in the locular jelly during seed development.</text>
</comment>
<comment type="similarity">
    <text evidence="11">Belongs to the cytochrome P450 family.</text>
</comment>
<reference key="1">
    <citation type="journal article" date="1996" name="Plant Cell">
        <title>The tomato Dwarf gene isolated by heterologous transposon tagging encodes the first member of a new cytochrome P450 family.</title>
        <authorList>
            <person name="Bishop G.J."/>
            <person name="Harrison K."/>
            <person name="Jones J.J.G.D."/>
        </authorList>
    </citation>
    <scope>NUCLEOTIDE SEQUENCE [MRNA]</scope>
</reference>
<reference key="2">
    <citation type="journal article" date="1999" name="Proc. Natl. Acad. Sci. U.S.A.">
        <title>The tomato DWARF enzyme catalyses C-6 oxidation in brassinosteroid biosynthesis.</title>
        <authorList>
            <person name="Bishop G.J."/>
            <person name="Nomura T."/>
            <person name="Yokota T."/>
            <person name="Harrison K."/>
            <person name="Noguchi T."/>
            <person name="Fujioka S."/>
            <person name="Takatsuto S."/>
            <person name="Jones J.D."/>
            <person name="Kamiya Y."/>
        </authorList>
    </citation>
    <scope>FUNCTION</scope>
    <scope>CATALYTIC ACTIVITY</scope>
    <scope>PATHWAY</scope>
</reference>
<reference key="3">
    <citation type="journal article" date="2001" name="Plant Physiol.">
        <title>Brassinosteroid-6-oxidases from Arabidopsis and tomato catalyze multiple C-6 oxidations in brassinosteroid biosynthesis.</title>
        <authorList>
            <person name="Shimada Y."/>
            <person name="Fujioka S."/>
            <person name="Miyauchi N."/>
            <person name="Kushiro M."/>
            <person name="Takatsuto S."/>
            <person name="Nomura T."/>
            <person name="Yokota T."/>
            <person name="Kamiya Y."/>
            <person name="Bishop G.J."/>
            <person name="Yoshida S."/>
        </authorList>
    </citation>
    <scope>FUNCTION</scope>
</reference>
<reference key="4">
    <citation type="journal article" date="2005" name="J. Biol. Chem.">
        <title>The last reaction producing brassinolide is catalyzed by cytochrome P-450s, CYP85A3 in tomato and CYP85A2 in Arabidopsis.</title>
        <authorList>
            <person name="Nomura T."/>
            <person name="Kushiro T."/>
            <person name="Yokota T."/>
            <person name="Kamiya Y."/>
            <person name="Bishop G.J."/>
            <person name="Yamaguchi S."/>
        </authorList>
    </citation>
    <scope>FUNCTION</scope>
    <scope>TISSUE SPECIFICITY</scope>
    <scope>CATALYTIC ACTIVITY</scope>
    <scope>PATHWAY</scope>
</reference>
<reference key="5">
    <citation type="journal article" date="2005" name="Plant J.">
        <title>Patterns of Dwarf expression and brassinosteroid accumulation in tomato reveal the importance of brassinosteroid synthesis during fruit development.</title>
        <authorList>
            <person name="Montoya T."/>
            <person name="Nomura T."/>
            <person name="Yokota T."/>
            <person name="Farrar K."/>
            <person name="Harrison K."/>
            <person name="Jones J.J.G.D."/>
            <person name="Kaneta T."/>
            <person name="Kamiya Y."/>
            <person name="Szekeres M."/>
            <person name="Bishop G.J."/>
        </authorList>
    </citation>
    <scope>DEVELOPMENTAL STAGE</scope>
    <scope>TISSUE SPECIFICITY</scope>
</reference>
<dbReference type="EC" id="1.14.14.-" evidence="4"/>
<dbReference type="EMBL" id="U54770">
    <property type="protein sequence ID" value="AAB17070.1"/>
    <property type="molecule type" value="mRNA"/>
</dbReference>
<dbReference type="PIR" id="T07859">
    <property type="entry name" value="T07859"/>
</dbReference>
<dbReference type="RefSeq" id="NP_001234263.1">
    <property type="nucleotide sequence ID" value="NM_001247334.2"/>
</dbReference>
<dbReference type="RefSeq" id="XP_069149193.1">
    <property type="nucleotide sequence ID" value="XM_069293092.1"/>
</dbReference>
<dbReference type="SMR" id="Q43147"/>
<dbReference type="FunCoup" id="Q43147">
    <property type="interactions" value="145"/>
</dbReference>
<dbReference type="STRING" id="4081.Q43147"/>
<dbReference type="PaxDb" id="4081-Solyc02g089160.2.1"/>
<dbReference type="EnsemblPlants" id="Solyc02g089160.3.1">
    <property type="protein sequence ID" value="Solyc02g089160.3.1"/>
    <property type="gene ID" value="Solyc02g089160.3"/>
</dbReference>
<dbReference type="GeneID" id="100037489"/>
<dbReference type="Gramene" id="Solyc02g089160.3.1">
    <property type="protein sequence ID" value="Solyc02g089160.3.1"/>
    <property type="gene ID" value="Solyc02g089160.3"/>
</dbReference>
<dbReference type="KEGG" id="sly:100037489"/>
<dbReference type="eggNOG" id="KOG0157">
    <property type="taxonomic scope" value="Eukaryota"/>
</dbReference>
<dbReference type="HOGENOM" id="CLU_001570_15_5_1"/>
<dbReference type="InParanoid" id="Q43147"/>
<dbReference type="OMA" id="HIRVTSY"/>
<dbReference type="OrthoDB" id="1372046at2759"/>
<dbReference type="PhylomeDB" id="Q43147"/>
<dbReference type="UniPathway" id="UPA00381"/>
<dbReference type="Proteomes" id="UP000004994">
    <property type="component" value="Chromosome 2"/>
</dbReference>
<dbReference type="ExpressionAtlas" id="Q43147">
    <property type="expression patterns" value="baseline and differential"/>
</dbReference>
<dbReference type="GO" id="GO:0016020">
    <property type="term" value="C:membrane"/>
    <property type="evidence" value="ECO:0007669"/>
    <property type="project" value="UniProtKB-SubCell"/>
</dbReference>
<dbReference type="GO" id="GO:0020037">
    <property type="term" value="F:heme binding"/>
    <property type="evidence" value="ECO:0007669"/>
    <property type="project" value="InterPro"/>
</dbReference>
<dbReference type="GO" id="GO:0005506">
    <property type="term" value="F:iron ion binding"/>
    <property type="evidence" value="ECO:0007669"/>
    <property type="project" value="InterPro"/>
</dbReference>
<dbReference type="GO" id="GO:0004497">
    <property type="term" value="F:monooxygenase activity"/>
    <property type="evidence" value="ECO:0000318"/>
    <property type="project" value="GO_Central"/>
</dbReference>
<dbReference type="GO" id="GO:0016705">
    <property type="term" value="F:oxidoreductase activity, acting on paired donors, with incorporation or reduction of molecular oxygen"/>
    <property type="evidence" value="ECO:0007669"/>
    <property type="project" value="InterPro"/>
</dbReference>
<dbReference type="GO" id="GO:0016132">
    <property type="term" value="P:brassinosteroid biosynthetic process"/>
    <property type="evidence" value="ECO:0000318"/>
    <property type="project" value="GO_Central"/>
</dbReference>
<dbReference type="GO" id="GO:0010268">
    <property type="term" value="P:brassinosteroid homeostasis"/>
    <property type="evidence" value="ECO:0000318"/>
    <property type="project" value="GO_Central"/>
</dbReference>
<dbReference type="CDD" id="cd11043">
    <property type="entry name" value="CYP90-like"/>
    <property type="match status" value="1"/>
</dbReference>
<dbReference type="FunFam" id="1.10.630.10:FF:000045">
    <property type="entry name" value="Cytochrome P450 85A1"/>
    <property type="match status" value="1"/>
</dbReference>
<dbReference type="Gene3D" id="1.10.630.10">
    <property type="entry name" value="Cytochrome P450"/>
    <property type="match status" value="1"/>
</dbReference>
<dbReference type="InterPro" id="IPR001128">
    <property type="entry name" value="Cyt_P450"/>
</dbReference>
<dbReference type="InterPro" id="IPR017972">
    <property type="entry name" value="Cyt_P450_CS"/>
</dbReference>
<dbReference type="InterPro" id="IPR002401">
    <property type="entry name" value="Cyt_P450_E_grp-I"/>
</dbReference>
<dbReference type="InterPro" id="IPR036396">
    <property type="entry name" value="Cyt_P450_sf"/>
</dbReference>
<dbReference type="PANTHER" id="PTHR24286">
    <property type="entry name" value="CYTOCHROME P450 26"/>
    <property type="match status" value="1"/>
</dbReference>
<dbReference type="PANTHER" id="PTHR24286:SF333">
    <property type="entry name" value="CYTOCHROME P450 85A1"/>
    <property type="match status" value="1"/>
</dbReference>
<dbReference type="Pfam" id="PF00067">
    <property type="entry name" value="p450"/>
    <property type="match status" value="1"/>
</dbReference>
<dbReference type="PRINTS" id="PR00463">
    <property type="entry name" value="EP450I"/>
</dbReference>
<dbReference type="PRINTS" id="PR00385">
    <property type="entry name" value="P450"/>
</dbReference>
<dbReference type="SUPFAM" id="SSF48264">
    <property type="entry name" value="Cytochrome P450"/>
    <property type="match status" value="1"/>
</dbReference>
<dbReference type="PROSITE" id="PS00086">
    <property type="entry name" value="CYTOCHROME_P450"/>
    <property type="match status" value="1"/>
</dbReference>
<proteinExistence type="evidence at protein level"/>
<accession>Q43147</accession>
<keyword id="KW-1069">Brassinosteroid biosynthesis</keyword>
<keyword id="KW-0349">Heme</keyword>
<keyword id="KW-0408">Iron</keyword>
<keyword id="KW-0444">Lipid biosynthesis</keyword>
<keyword id="KW-0443">Lipid metabolism</keyword>
<keyword id="KW-0472">Membrane</keyword>
<keyword id="KW-0479">Metal-binding</keyword>
<keyword id="KW-0503">Monooxygenase</keyword>
<keyword id="KW-0560">Oxidoreductase</keyword>
<keyword id="KW-1185">Reference proteome</keyword>
<keyword id="KW-0752">Steroid biosynthesis</keyword>
<keyword id="KW-0812">Transmembrane</keyword>
<keyword id="KW-1133">Transmembrane helix</keyword>
<protein>
    <recommendedName>
        <fullName evidence="8">Cytochrome P450 85A1</fullName>
        <shortName evidence="8">LeCYP85A1</shortName>
    </recommendedName>
    <alternativeName>
        <fullName evidence="7">C6-oxidase</fullName>
    </alternativeName>
    <alternativeName>
        <fullName evidence="8">Castasterone synthase CYP85A1</fullName>
        <ecNumber evidence="4">1.14.14.-</ecNumber>
    </alternativeName>
    <alternativeName>
        <fullName evidence="9 10">Protein DWARF</fullName>
    </alternativeName>
</protein>
<feature type="chain" id="PRO_0000052171" description="Cytochrome P450 85A1">
    <location>
        <begin position="1"/>
        <end position="464"/>
    </location>
</feature>
<feature type="transmembrane region" description="Helical" evidence="2">
    <location>
        <begin position="2"/>
        <end position="22"/>
    </location>
</feature>
<feature type="binding site" description="axial binding residue" evidence="1">
    <location>
        <position position="414"/>
    </location>
    <ligand>
        <name>heme</name>
        <dbReference type="ChEBI" id="CHEBI:30413"/>
    </ligand>
    <ligandPart>
        <name>Fe</name>
        <dbReference type="ChEBI" id="CHEBI:18248"/>
    </ligandPart>
</feature>
<evidence type="ECO:0000250" key="1">
    <source>
        <dbReference type="UniProtKB" id="P04798"/>
    </source>
</evidence>
<evidence type="ECO:0000255" key="2"/>
<evidence type="ECO:0000269" key="3">
    <source>
    </source>
</evidence>
<evidence type="ECO:0000269" key="4">
    <source>
    </source>
</evidence>
<evidence type="ECO:0000269" key="5">
    <source>
    </source>
</evidence>
<evidence type="ECO:0000269" key="6">
    <source>
    </source>
</evidence>
<evidence type="ECO:0000303" key="7">
    <source>
    </source>
</evidence>
<evidence type="ECO:0000303" key="8">
    <source>
    </source>
</evidence>
<evidence type="ECO:0000303" key="9">
    <source>
    </source>
</evidence>
<evidence type="ECO:0000303" key="10">
    <source>
    </source>
</evidence>
<evidence type="ECO:0000305" key="11"/>